<comment type="function">
    <text evidence="1">Major role in the synthesis of nucleoside triphosphates other than ATP. The ATP gamma phosphate is transferred to the NDP beta phosphate via a ping-pong mechanism, using a phosphorylated active-site intermediate.</text>
</comment>
<comment type="catalytic activity">
    <reaction evidence="1">
        <text>a 2'-deoxyribonucleoside 5'-diphosphate + ATP = a 2'-deoxyribonucleoside 5'-triphosphate + ADP</text>
        <dbReference type="Rhea" id="RHEA:44640"/>
        <dbReference type="ChEBI" id="CHEBI:30616"/>
        <dbReference type="ChEBI" id="CHEBI:61560"/>
        <dbReference type="ChEBI" id="CHEBI:73316"/>
        <dbReference type="ChEBI" id="CHEBI:456216"/>
        <dbReference type="EC" id="2.7.4.6"/>
    </reaction>
</comment>
<comment type="catalytic activity">
    <reaction evidence="1">
        <text>a ribonucleoside 5'-diphosphate + ATP = a ribonucleoside 5'-triphosphate + ADP</text>
        <dbReference type="Rhea" id="RHEA:18113"/>
        <dbReference type="ChEBI" id="CHEBI:30616"/>
        <dbReference type="ChEBI" id="CHEBI:57930"/>
        <dbReference type="ChEBI" id="CHEBI:61557"/>
        <dbReference type="ChEBI" id="CHEBI:456216"/>
        <dbReference type="EC" id="2.7.4.6"/>
    </reaction>
</comment>
<comment type="cofactor">
    <cofactor evidence="1">
        <name>Mg(2+)</name>
        <dbReference type="ChEBI" id="CHEBI:18420"/>
    </cofactor>
</comment>
<comment type="subunit">
    <text evidence="1">Homotetramer.</text>
</comment>
<comment type="subcellular location">
    <subcellularLocation>
        <location evidence="1">Cytoplasm</location>
    </subcellularLocation>
</comment>
<comment type="similarity">
    <text evidence="1">Belongs to the NDK family.</text>
</comment>
<accession>A4JEP3</accession>
<gene>
    <name evidence="1" type="primary">ndk</name>
    <name type="ordered locus">Bcep1808_1742</name>
</gene>
<name>NDK_BURVG</name>
<keyword id="KW-0067">ATP-binding</keyword>
<keyword id="KW-0963">Cytoplasm</keyword>
<keyword id="KW-0418">Kinase</keyword>
<keyword id="KW-0460">Magnesium</keyword>
<keyword id="KW-0479">Metal-binding</keyword>
<keyword id="KW-0546">Nucleotide metabolism</keyword>
<keyword id="KW-0547">Nucleotide-binding</keyword>
<keyword id="KW-0597">Phosphoprotein</keyword>
<keyword id="KW-0808">Transferase</keyword>
<dbReference type="EC" id="2.7.4.6" evidence="1"/>
<dbReference type="EMBL" id="CP000614">
    <property type="protein sequence ID" value="ABO54746.1"/>
    <property type="molecule type" value="Genomic_DNA"/>
</dbReference>
<dbReference type="SMR" id="A4JEP3"/>
<dbReference type="KEGG" id="bvi:Bcep1808_1742"/>
<dbReference type="eggNOG" id="COG0105">
    <property type="taxonomic scope" value="Bacteria"/>
</dbReference>
<dbReference type="HOGENOM" id="CLU_060216_8_1_4"/>
<dbReference type="Proteomes" id="UP000002287">
    <property type="component" value="Chromosome 1"/>
</dbReference>
<dbReference type="GO" id="GO:0005737">
    <property type="term" value="C:cytoplasm"/>
    <property type="evidence" value="ECO:0007669"/>
    <property type="project" value="UniProtKB-SubCell"/>
</dbReference>
<dbReference type="GO" id="GO:0005524">
    <property type="term" value="F:ATP binding"/>
    <property type="evidence" value="ECO:0007669"/>
    <property type="project" value="UniProtKB-UniRule"/>
</dbReference>
<dbReference type="GO" id="GO:0046872">
    <property type="term" value="F:metal ion binding"/>
    <property type="evidence" value="ECO:0007669"/>
    <property type="project" value="UniProtKB-KW"/>
</dbReference>
<dbReference type="GO" id="GO:0004550">
    <property type="term" value="F:nucleoside diphosphate kinase activity"/>
    <property type="evidence" value="ECO:0007669"/>
    <property type="project" value="UniProtKB-UniRule"/>
</dbReference>
<dbReference type="GO" id="GO:0006241">
    <property type="term" value="P:CTP biosynthetic process"/>
    <property type="evidence" value="ECO:0007669"/>
    <property type="project" value="UniProtKB-UniRule"/>
</dbReference>
<dbReference type="GO" id="GO:0006183">
    <property type="term" value="P:GTP biosynthetic process"/>
    <property type="evidence" value="ECO:0007669"/>
    <property type="project" value="UniProtKB-UniRule"/>
</dbReference>
<dbReference type="GO" id="GO:0006228">
    <property type="term" value="P:UTP biosynthetic process"/>
    <property type="evidence" value="ECO:0007669"/>
    <property type="project" value="UniProtKB-UniRule"/>
</dbReference>
<dbReference type="CDD" id="cd04413">
    <property type="entry name" value="NDPk_I"/>
    <property type="match status" value="1"/>
</dbReference>
<dbReference type="FunFam" id="3.30.70.141:FF:000001">
    <property type="entry name" value="Nucleoside diphosphate kinase"/>
    <property type="match status" value="1"/>
</dbReference>
<dbReference type="Gene3D" id="3.30.70.141">
    <property type="entry name" value="Nucleoside diphosphate kinase-like domain"/>
    <property type="match status" value="1"/>
</dbReference>
<dbReference type="HAMAP" id="MF_00451">
    <property type="entry name" value="NDP_kinase"/>
    <property type="match status" value="1"/>
</dbReference>
<dbReference type="InterPro" id="IPR034907">
    <property type="entry name" value="NDK-like_dom"/>
</dbReference>
<dbReference type="InterPro" id="IPR036850">
    <property type="entry name" value="NDK-like_dom_sf"/>
</dbReference>
<dbReference type="InterPro" id="IPR001564">
    <property type="entry name" value="Nucleoside_diP_kinase"/>
</dbReference>
<dbReference type="NCBIfam" id="NF001908">
    <property type="entry name" value="PRK00668.1"/>
    <property type="match status" value="1"/>
</dbReference>
<dbReference type="PANTHER" id="PTHR46161">
    <property type="entry name" value="NUCLEOSIDE DIPHOSPHATE KINASE"/>
    <property type="match status" value="1"/>
</dbReference>
<dbReference type="PANTHER" id="PTHR46161:SF3">
    <property type="entry name" value="NUCLEOSIDE DIPHOSPHATE KINASE DDB_G0292928-RELATED"/>
    <property type="match status" value="1"/>
</dbReference>
<dbReference type="Pfam" id="PF00334">
    <property type="entry name" value="NDK"/>
    <property type="match status" value="1"/>
</dbReference>
<dbReference type="PRINTS" id="PR01243">
    <property type="entry name" value="NUCDPKINASE"/>
</dbReference>
<dbReference type="SMART" id="SM00562">
    <property type="entry name" value="NDK"/>
    <property type="match status" value="1"/>
</dbReference>
<dbReference type="SUPFAM" id="SSF54919">
    <property type="entry name" value="Nucleoside diphosphate kinase, NDK"/>
    <property type="match status" value="1"/>
</dbReference>
<dbReference type="PROSITE" id="PS51374">
    <property type="entry name" value="NDPK_LIKE"/>
    <property type="match status" value="1"/>
</dbReference>
<reference key="1">
    <citation type="submission" date="2007-03" db="EMBL/GenBank/DDBJ databases">
        <title>Complete sequence of chromosome 1 of Burkholderia vietnamiensis G4.</title>
        <authorList>
            <consortium name="US DOE Joint Genome Institute"/>
            <person name="Copeland A."/>
            <person name="Lucas S."/>
            <person name="Lapidus A."/>
            <person name="Barry K."/>
            <person name="Detter J.C."/>
            <person name="Glavina del Rio T."/>
            <person name="Hammon N."/>
            <person name="Israni S."/>
            <person name="Dalin E."/>
            <person name="Tice H."/>
            <person name="Pitluck S."/>
            <person name="Chain P."/>
            <person name="Malfatti S."/>
            <person name="Shin M."/>
            <person name="Vergez L."/>
            <person name="Schmutz J."/>
            <person name="Larimer F."/>
            <person name="Land M."/>
            <person name="Hauser L."/>
            <person name="Kyrpides N."/>
            <person name="Tiedje J."/>
            <person name="Richardson P."/>
        </authorList>
    </citation>
    <scope>NUCLEOTIDE SEQUENCE [LARGE SCALE GENOMIC DNA]</scope>
    <source>
        <strain>G4 / LMG 22486</strain>
    </source>
</reference>
<evidence type="ECO:0000255" key="1">
    <source>
        <dbReference type="HAMAP-Rule" id="MF_00451"/>
    </source>
</evidence>
<proteinExistence type="inferred from homology"/>
<feature type="chain" id="PRO_1000026219" description="Nucleoside diphosphate kinase">
    <location>
        <begin position="1"/>
        <end position="141"/>
    </location>
</feature>
<feature type="active site" description="Pros-phosphohistidine intermediate" evidence="1">
    <location>
        <position position="117"/>
    </location>
</feature>
<feature type="binding site" evidence="1">
    <location>
        <position position="11"/>
    </location>
    <ligand>
        <name>ATP</name>
        <dbReference type="ChEBI" id="CHEBI:30616"/>
    </ligand>
</feature>
<feature type="binding site" evidence="1">
    <location>
        <position position="59"/>
    </location>
    <ligand>
        <name>ATP</name>
        <dbReference type="ChEBI" id="CHEBI:30616"/>
    </ligand>
</feature>
<feature type="binding site" evidence="1">
    <location>
        <position position="87"/>
    </location>
    <ligand>
        <name>ATP</name>
        <dbReference type="ChEBI" id="CHEBI:30616"/>
    </ligand>
</feature>
<feature type="binding site" evidence="1">
    <location>
        <position position="93"/>
    </location>
    <ligand>
        <name>ATP</name>
        <dbReference type="ChEBI" id="CHEBI:30616"/>
    </ligand>
</feature>
<feature type="binding site" evidence="1">
    <location>
        <position position="104"/>
    </location>
    <ligand>
        <name>ATP</name>
        <dbReference type="ChEBI" id="CHEBI:30616"/>
    </ligand>
</feature>
<feature type="binding site" evidence="1">
    <location>
        <position position="114"/>
    </location>
    <ligand>
        <name>ATP</name>
        <dbReference type="ChEBI" id="CHEBI:30616"/>
    </ligand>
</feature>
<protein>
    <recommendedName>
        <fullName evidence="1">Nucleoside diphosphate kinase</fullName>
        <shortName evidence="1">NDK</shortName>
        <shortName evidence="1">NDP kinase</shortName>
        <ecNumber evidence="1">2.7.4.6</ecNumber>
    </recommendedName>
    <alternativeName>
        <fullName evidence="1">Nucleoside-2-P kinase</fullName>
    </alternativeName>
</protein>
<organism>
    <name type="scientific">Burkholderia vietnamiensis (strain G4 / LMG 22486)</name>
    <name type="common">Burkholderia cepacia (strain R1808)</name>
    <dbReference type="NCBI Taxonomy" id="269482"/>
    <lineage>
        <taxon>Bacteria</taxon>
        <taxon>Pseudomonadati</taxon>
        <taxon>Pseudomonadota</taxon>
        <taxon>Betaproteobacteria</taxon>
        <taxon>Burkholderiales</taxon>
        <taxon>Burkholderiaceae</taxon>
        <taxon>Burkholderia</taxon>
        <taxon>Burkholderia cepacia complex</taxon>
    </lineage>
</organism>
<sequence>MAIERTLSIIKPDAVAKNVIGQIYSRFEGAGLKIVASRMAHLSRADAEKFYAVHAARPFFKDLVDFMISGPVMIQVLEGEGAILKNRDLMGATDPKKAEKGTIRADFADSIDANAVHGSDAAETAAVEIAFFFPEMNVYSR</sequence>